<sequence length="239" mass="26480">MSLMKEMLSAGVHFGHKKAFWNPQMKEYIFGINHGVHIINLEKTVPLFQDAVNFVGKTVANGGKILFVGTKRQAQDIVEAEAKRCGMPFVSHRWLGGMLTNYKTVRQSIKRLAQLEKMREDGTLESLTKKEMLQNIRTIEKLEKVLGGIKEMGGLPDAIVVIDSNKEHIAIQEAQKLGIKVVAIVDTNSNPEGIDYIIPGNDDAVKSISFYMKKFADAVIDAQGLDRAVEAKADEAVQA</sequence>
<gene>
    <name evidence="1" type="primary">rpsB</name>
    <name type="ordered locus">FTN_0227</name>
</gene>
<reference key="1">
    <citation type="journal article" date="2007" name="Genome Biol.">
        <title>Comparison of Francisella tularensis genomes reveals evolutionary events associated with the emergence of human pathogenic strains.</title>
        <authorList>
            <person name="Rohmer L."/>
            <person name="Fong C."/>
            <person name="Abmayr S."/>
            <person name="Wasnick M."/>
            <person name="Larson Freeman T.J."/>
            <person name="Radey M."/>
            <person name="Guina T."/>
            <person name="Svensson K."/>
            <person name="Hayden H.S."/>
            <person name="Jacobs M."/>
            <person name="Gallagher L.A."/>
            <person name="Manoil C."/>
            <person name="Ernst R.K."/>
            <person name="Drees B."/>
            <person name="Buckley D."/>
            <person name="Haugen E."/>
            <person name="Bovee D."/>
            <person name="Zhou Y."/>
            <person name="Chang J."/>
            <person name="Levy R."/>
            <person name="Lim R."/>
            <person name="Gillett W."/>
            <person name="Guenthener D."/>
            <person name="Kang A."/>
            <person name="Shaffer S.A."/>
            <person name="Taylor G."/>
            <person name="Chen J."/>
            <person name="Gallis B."/>
            <person name="D'Argenio D.A."/>
            <person name="Forsman M."/>
            <person name="Olson M.V."/>
            <person name="Goodlett D.R."/>
            <person name="Kaul R."/>
            <person name="Miller S.I."/>
            <person name="Brittnacher M.J."/>
        </authorList>
    </citation>
    <scope>NUCLEOTIDE SEQUENCE [LARGE SCALE GENOMIC DNA]</scope>
    <source>
        <strain>U112</strain>
    </source>
</reference>
<name>RS2_FRATN</name>
<keyword id="KW-0687">Ribonucleoprotein</keyword>
<keyword id="KW-0689">Ribosomal protein</keyword>
<proteinExistence type="inferred from homology"/>
<protein>
    <recommendedName>
        <fullName evidence="1">Small ribosomal subunit protein uS2</fullName>
    </recommendedName>
    <alternativeName>
        <fullName evidence="2">30S ribosomal protein S2</fullName>
    </alternativeName>
</protein>
<accession>A0Q4H1</accession>
<comment type="similarity">
    <text evidence="1">Belongs to the universal ribosomal protein uS2 family.</text>
</comment>
<organism>
    <name type="scientific">Francisella tularensis subsp. novicida (strain U112)</name>
    <dbReference type="NCBI Taxonomy" id="401614"/>
    <lineage>
        <taxon>Bacteria</taxon>
        <taxon>Pseudomonadati</taxon>
        <taxon>Pseudomonadota</taxon>
        <taxon>Gammaproteobacteria</taxon>
        <taxon>Thiotrichales</taxon>
        <taxon>Francisellaceae</taxon>
        <taxon>Francisella</taxon>
    </lineage>
</organism>
<dbReference type="EMBL" id="CP000439">
    <property type="protein sequence ID" value="ABK89136.1"/>
    <property type="molecule type" value="Genomic_DNA"/>
</dbReference>
<dbReference type="RefSeq" id="WP_003041451.1">
    <property type="nucleotide sequence ID" value="NC_008601.1"/>
</dbReference>
<dbReference type="SMR" id="A0Q4H1"/>
<dbReference type="KEGG" id="ftn:FTN_0227"/>
<dbReference type="BioCyc" id="FTUL401614:G1G75-238-MONOMER"/>
<dbReference type="Proteomes" id="UP000000762">
    <property type="component" value="Chromosome"/>
</dbReference>
<dbReference type="GO" id="GO:0022627">
    <property type="term" value="C:cytosolic small ribosomal subunit"/>
    <property type="evidence" value="ECO:0007669"/>
    <property type="project" value="TreeGrafter"/>
</dbReference>
<dbReference type="GO" id="GO:0003735">
    <property type="term" value="F:structural constituent of ribosome"/>
    <property type="evidence" value="ECO:0007669"/>
    <property type="project" value="InterPro"/>
</dbReference>
<dbReference type="GO" id="GO:0006412">
    <property type="term" value="P:translation"/>
    <property type="evidence" value="ECO:0007669"/>
    <property type="project" value="UniProtKB-UniRule"/>
</dbReference>
<dbReference type="CDD" id="cd01425">
    <property type="entry name" value="RPS2"/>
    <property type="match status" value="1"/>
</dbReference>
<dbReference type="FunFam" id="1.10.287.610:FF:000001">
    <property type="entry name" value="30S ribosomal protein S2"/>
    <property type="match status" value="1"/>
</dbReference>
<dbReference type="Gene3D" id="3.40.50.10490">
    <property type="entry name" value="Glucose-6-phosphate isomerase like protein, domain 1"/>
    <property type="match status" value="1"/>
</dbReference>
<dbReference type="Gene3D" id="1.10.287.610">
    <property type="entry name" value="Helix hairpin bin"/>
    <property type="match status" value="1"/>
</dbReference>
<dbReference type="HAMAP" id="MF_00291_B">
    <property type="entry name" value="Ribosomal_uS2_B"/>
    <property type="match status" value="1"/>
</dbReference>
<dbReference type="InterPro" id="IPR001865">
    <property type="entry name" value="Ribosomal_uS2"/>
</dbReference>
<dbReference type="InterPro" id="IPR005706">
    <property type="entry name" value="Ribosomal_uS2_bac/mit/plastid"/>
</dbReference>
<dbReference type="InterPro" id="IPR018130">
    <property type="entry name" value="Ribosomal_uS2_CS"/>
</dbReference>
<dbReference type="InterPro" id="IPR023591">
    <property type="entry name" value="Ribosomal_uS2_flav_dom_sf"/>
</dbReference>
<dbReference type="NCBIfam" id="TIGR01011">
    <property type="entry name" value="rpsB_bact"/>
    <property type="match status" value="1"/>
</dbReference>
<dbReference type="PANTHER" id="PTHR12534">
    <property type="entry name" value="30S RIBOSOMAL PROTEIN S2 PROKARYOTIC AND ORGANELLAR"/>
    <property type="match status" value="1"/>
</dbReference>
<dbReference type="PANTHER" id="PTHR12534:SF0">
    <property type="entry name" value="SMALL RIBOSOMAL SUBUNIT PROTEIN US2M"/>
    <property type="match status" value="1"/>
</dbReference>
<dbReference type="Pfam" id="PF00318">
    <property type="entry name" value="Ribosomal_S2"/>
    <property type="match status" value="1"/>
</dbReference>
<dbReference type="PRINTS" id="PR00395">
    <property type="entry name" value="RIBOSOMALS2"/>
</dbReference>
<dbReference type="SUPFAM" id="SSF52313">
    <property type="entry name" value="Ribosomal protein S2"/>
    <property type="match status" value="1"/>
</dbReference>
<dbReference type="PROSITE" id="PS00962">
    <property type="entry name" value="RIBOSOMAL_S2_1"/>
    <property type="match status" value="1"/>
</dbReference>
<feature type="chain" id="PRO_1000003963" description="Small ribosomal subunit protein uS2">
    <location>
        <begin position="1"/>
        <end position="239"/>
    </location>
</feature>
<evidence type="ECO:0000255" key="1">
    <source>
        <dbReference type="HAMAP-Rule" id="MF_00291"/>
    </source>
</evidence>
<evidence type="ECO:0000305" key="2"/>